<proteinExistence type="inferred from homology"/>
<geneLocation type="chloroplast"/>
<sequence>MQQTYQYGWIIPFIPLPIPILIGVGLLLFPTATKNLRRMWSFQSVLLLTIVMIFSINLSIQQINSNSIYQYVWSWIINNDFSLEFGYLIDPLTSIMSILITTVGIMVLIYSDNYMAHDQAYLRFFAYMGFFSTSMLGLVTSSNLIQIYIFWELVGMCSYLLIGFWFTRPLAANACQKAFVTNRIGDFGLLLGILGFYWITGSFEFRDLFEIFNNLIYDNEVNSLFVTLCAGLVFAGAVAKSAQFPLHVWLPDAMEGPTPISALIHAATMVAAGIFLVARLIPLFIVIPYIMNFISLIGIITVLLGATLALAQKDIKRGLAFSTMSQLGYMMLALGMGSYRSALFHLITHAYSKALLFLGSGSVIHSMETIVGYSPYKSQNMVLMGGLTKHIPITKNTFLLGTLSLCGIPPLACFWSKDEILNDSWLYSTIFAIIAWATAGLTAFYIFRIYLLTFEGHLSVHFQNYIGKEKVFFYSISLWGRGASKKINNNFSLSTMNNIESSSFLKKKTYPIAENVRNVTRPFITITHFENKKFYSYPYEPDNTMLFPLLILGLFTLFVGSIGIPFNQEGVDLBILSKWLTPSINLLHQKLSNSMDWYEFWKDTVSSVSIAYLGIFIASLLYKPPYSSLQNFDLINSILKRGPKRILWDKIINGVYNWSYNRAYIDSFYTRSFTGGIRGLAKLTHFFDRRIVDGITNGVGVINFFIGEAIKYIGGGRISSYLFFYLTYVSIFLLVFFII</sequence>
<organism>
    <name type="scientific">Coffea arabica</name>
    <name type="common">Arabian coffee</name>
    <dbReference type="NCBI Taxonomy" id="13443"/>
    <lineage>
        <taxon>Eukaryota</taxon>
        <taxon>Viridiplantae</taxon>
        <taxon>Streptophyta</taxon>
        <taxon>Embryophyta</taxon>
        <taxon>Tracheophyta</taxon>
        <taxon>Spermatophyta</taxon>
        <taxon>Magnoliopsida</taxon>
        <taxon>eudicotyledons</taxon>
        <taxon>Gunneridae</taxon>
        <taxon>Pentapetalae</taxon>
        <taxon>asterids</taxon>
        <taxon>lamiids</taxon>
        <taxon>Gentianales</taxon>
        <taxon>Rubiaceae</taxon>
        <taxon>Ixoroideae</taxon>
        <taxon>Gardenieae complex</taxon>
        <taxon>Bertiereae - Coffeeae clade</taxon>
        <taxon>Coffeeae</taxon>
        <taxon>Coffea</taxon>
    </lineage>
</organism>
<evidence type="ECO:0000250" key="1"/>
<evidence type="ECO:0000255" key="2"/>
<evidence type="ECO:0000305" key="3"/>
<feature type="chain" id="PRO_0000360925" description="NAD(P)H-quinone oxidoreductase subunit 5, chloroplastic">
    <location>
        <begin position="1"/>
        <end position="739"/>
    </location>
</feature>
<feature type="transmembrane region" description="Helical" evidence="2">
    <location>
        <begin position="9"/>
        <end position="29"/>
    </location>
</feature>
<feature type="transmembrane region" description="Helical" evidence="2">
    <location>
        <begin position="40"/>
        <end position="60"/>
    </location>
</feature>
<feature type="transmembrane region" description="Helical" evidence="2">
    <location>
        <begin position="89"/>
        <end position="109"/>
    </location>
</feature>
<feature type="transmembrane region" description="Helical" evidence="2">
    <location>
        <begin position="125"/>
        <end position="145"/>
    </location>
</feature>
<feature type="transmembrane region" description="Helical" evidence="2">
    <location>
        <begin position="147"/>
        <end position="167"/>
    </location>
</feature>
<feature type="transmembrane region" description="Helical" evidence="2">
    <location>
        <begin position="184"/>
        <end position="204"/>
    </location>
</feature>
<feature type="transmembrane region" description="Helical" evidence="2">
    <location>
        <begin position="224"/>
        <end position="244"/>
    </location>
</feature>
<feature type="transmembrane region" description="Helical" evidence="2">
    <location>
        <begin position="258"/>
        <end position="278"/>
    </location>
</feature>
<feature type="transmembrane region" description="Helical" evidence="2">
    <location>
        <begin position="289"/>
        <end position="311"/>
    </location>
</feature>
<feature type="transmembrane region" description="Helical" evidence="2">
    <location>
        <begin position="318"/>
        <end position="338"/>
    </location>
</feature>
<feature type="transmembrane region" description="Helical" evidence="2">
    <location>
        <begin position="354"/>
        <end position="374"/>
    </location>
</feature>
<feature type="transmembrane region" description="Helical" evidence="2">
    <location>
        <begin position="396"/>
        <end position="416"/>
    </location>
</feature>
<feature type="transmembrane region" description="Helical" evidence="2">
    <location>
        <begin position="427"/>
        <end position="447"/>
    </location>
</feature>
<feature type="transmembrane region" description="Helical" evidence="2">
    <location>
        <begin position="546"/>
        <end position="566"/>
    </location>
</feature>
<feature type="transmembrane region" description="Helical" evidence="2">
    <location>
        <begin position="605"/>
        <end position="625"/>
    </location>
</feature>
<feature type="transmembrane region" description="Helical" evidence="2">
    <location>
        <begin position="718"/>
        <end position="738"/>
    </location>
</feature>
<gene>
    <name type="primary">ndhF</name>
</gene>
<protein>
    <recommendedName>
        <fullName>NAD(P)H-quinone oxidoreductase subunit 5, chloroplastic</fullName>
        <ecNumber>7.1.1.-</ecNumber>
    </recommendedName>
    <alternativeName>
        <fullName>NAD(P)H dehydrogenase subunit 5</fullName>
    </alternativeName>
    <alternativeName>
        <fullName>NADH-plastoquinone oxidoreductase subunit 5</fullName>
    </alternativeName>
</protein>
<reference key="1">
    <citation type="journal article" date="2007" name="Plant Biotechnol. J.">
        <title>The complete nucleotide sequence of the coffee (Coffea arabica L.) chloroplast genome: organization and implications for biotechnology and phylogenetic relationships amongst angiosperms.</title>
        <authorList>
            <person name="Samson N."/>
            <person name="Bausher M.G."/>
            <person name="Lee S.-B."/>
            <person name="Jansen R.K."/>
            <person name="Daniell H."/>
        </authorList>
    </citation>
    <scope>NUCLEOTIDE SEQUENCE [LARGE SCALE GENOMIC DNA]</scope>
</reference>
<comment type="function">
    <text evidence="1">NDH shuttles electrons from NAD(P)H:plastoquinone, via FMN and iron-sulfur (Fe-S) centers, to quinones in the photosynthetic chain and possibly in a chloroplast respiratory chain. The immediate electron acceptor for the enzyme in this species is believed to be plastoquinone. Couples the redox reaction to proton translocation, and thus conserves the redox energy in a proton gradient (By similarity).</text>
</comment>
<comment type="catalytic activity">
    <reaction>
        <text>a plastoquinone + NADH + (n+1) H(+)(in) = a plastoquinol + NAD(+) + n H(+)(out)</text>
        <dbReference type="Rhea" id="RHEA:42608"/>
        <dbReference type="Rhea" id="RHEA-COMP:9561"/>
        <dbReference type="Rhea" id="RHEA-COMP:9562"/>
        <dbReference type="ChEBI" id="CHEBI:15378"/>
        <dbReference type="ChEBI" id="CHEBI:17757"/>
        <dbReference type="ChEBI" id="CHEBI:57540"/>
        <dbReference type="ChEBI" id="CHEBI:57945"/>
        <dbReference type="ChEBI" id="CHEBI:62192"/>
    </reaction>
</comment>
<comment type="catalytic activity">
    <reaction>
        <text>a plastoquinone + NADPH + (n+1) H(+)(in) = a plastoquinol + NADP(+) + n H(+)(out)</text>
        <dbReference type="Rhea" id="RHEA:42612"/>
        <dbReference type="Rhea" id="RHEA-COMP:9561"/>
        <dbReference type="Rhea" id="RHEA-COMP:9562"/>
        <dbReference type="ChEBI" id="CHEBI:15378"/>
        <dbReference type="ChEBI" id="CHEBI:17757"/>
        <dbReference type="ChEBI" id="CHEBI:57783"/>
        <dbReference type="ChEBI" id="CHEBI:58349"/>
        <dbReference type="ChEBI" id="CHEBI:62192"/>
    </reaction>
</comment>
<comment type="subunit">
    <text evidence="1">NDH is composed of at least 16 different subunits, 5 of which are encoded in the nucleus.</text>
</comment>
<comment type="subcellular location">
    <subcellularLocation>
        <location evidence="1">Plastid</location>
        <location evidence="1">Chloroplast thylakoid membrane</location>
        <topology evidence="1">Multi-pass membrane protein</topology>
    </subcellularLocation>
</comment>
<comment type="similarity">
    <text evidence="3">Belongs to the complex I subunit 5 family.</text>
</comment>
<accession>A0A382</accession>
<keyword id="KW-0150">Chloroplast</keyword>
<keyword id="KW-0472">Membrane</keyword>
<keyword id="KW-0520">NAD</keyword>
<keyword id="KW-0521">NADP</keyword>
<keyword id="KW-0934">Plastid</keyword>
<keyword id="KW-0618">Plastoquinone</keyword>
<keyword id="KW-0874">Quinone</keyword>
<keyword id="KW-1185">Reference proteome</keyword>
<keyword id="KW-0793">Thylakoid</keyword>
<keyword id="KW-1278">Translocase</keyword>
<keyword id="KW-0812">Transmembrane</keyword>
<keyword id="KW-1133">Transmembrane helix</keyword>
<keyword id="KW-0813">Transport</keyword>
<name>NU5C_COFAR</name>
<dbReference type="EC" id="7.1.1.-"/>
<dbReference type="EMBL" id="EF044213">
    <property type="protein sequence ID" value="ABJ89726.1"/>
    <property type="molecule type" value="Genomic_DNA"/>
</dbReference>
<dbReference type="RefSeq" id="YP_817529.1">
    <property type="nucleotide sequence ID" value="NC_008535.1"/>
</dbReference>
<dbReference type="GeneID" id="4421847"/>
<dbReference type="OrthoDB" id="543408at2759"/>
<dbReference type="Proteomes" id="UP000515148">
    <property type="component" value="Chloroplast Pltd"/>
</dbReference>
<dbReference type="GO" id="GO:0009535">
    <property type="term" value="C:chloroplast thylakoid membrane"/>
    <property type="evidence" value="ECO:0007669"/>
    <property type="project" value="UniProtKB-SubCell"/>
</dbReference>
<dbReference type="GO" id="GO:0008137">
    <property type="term" value="F:NADH dehydrogenase (ubiquinone) activity"/>
    <property type="evidence" value="ECO:0007669"/>
    <property type="project" value="InterPro"/>
</dbReference>
<dbReference type="GO" id="GO:0048038">
    <property type="term" value="F:quinone binding"/>
    <property type="evidence" value="ECO:0007669"/>
    <property type="project" value="UniProtKB-KW"/>
</dbReference>
<dbReference type="GO" id="GO:0042773">
    <property type="term" value="P:ATP synthesis coupled electron transport"/>
    <property type="evidence" value="ECO:0007669"/>
    <property type="project" value="InterPro"/>
</dbReference>
<dbReference type="GO" id="GO:0015990">
    <property type="term" value="P:electron transport coupled proton transport"/>
    <property type="evidence" value="ECO:0007669"/>
    <property type="project" value="TreeGrafter"/>
</dbReference>
<dbReference type="Gene3D" id="1.20.5.2700">
    <property type="match status" value="1"/>
</dbReference>
<dbReference type="InterPro" id="IPR002128">
    <property type="entry name" value="NADH_UbQ_OxRdtase_chlpt_su5_C"/>
</dbReference>
<dbReference type="InterPro" id="IPR018393">
    <property type="entry name" value="NADHpl_OxRdtase_5_subgr"/>
</dbReference>
<dbReference type="InterPro" id="IPR001750">
    <property type="entry name" value="ND/Mrp_TM"/>
</dbReference>
<dbReference type="InterPro" id="IPR003945">
    <property type="entry name" value="NU5C-like"/>
</dbReference>
<dbReference type="InterPro" id="IPR001516">
    <property type="entry name" value="Proton_antipo_N"/>
</dbReference>
<dbReference type="NCBIfam" id="TIGR01974">
    <property type="entry name" value="NDH_I_L"/>
    <property type="match status" value="1"/>
</dbReference>
<dbReference type="NCBIfam" id="NF005141">
    <property type="entry name" value="PRK06590.1"/>
    <property type="match status" value="1"/>
</dbReference>
<dbReference type="PANTHER" id="PTHR42829">
    <property type="entry name" value="NADH-UBIQUINONE OXIDOREDUCTASE CHAIN 5"/>
    <property type="match status" value="1"/>
</dbReference>
<dbReference type="PANTHER" id="PTHR42829:SF2">
    <property type="entry name" value="NADH-UBIQUINONE OXIDOREDUCTASE CHAIN 5"/>
    <property type="match status" value="1"/>
</dbReference>
<dbReference type="Pfam" id="PF01010">
    <property type="entry name" value="Proton_antipo_C"/>
    <property type="match status" value="1"/>
</dbReference>
<dbReference type="Pfam" id="PF00361">
    <property type="entry name" value="Proton_antipo_M"/>
    <property type="match status" value="1"/>
</dbReference>
<dbReference type="Pfam" id="PF00662">
    <property type="entry name" value="Proton_antipo_N"/>
    <property type="match status" value="1"/>
</dbReference>
<dbReference type="PRINTS" id="PR01434">
    <property type="entry name" value="NADHDHGNASE5"/>
</dbReference>
<dbReference type="PRINTS" id="PR01435">
    <property type="entry name" value="NPOXDRDTASE5"/>
</dbReference>